<keyword id="KW-0030">Aminoacyl-tRNA synthetase</keyword>
<keyword id="KW-0067">ATP-binding</keyword>
<keyword id="KW-0963">Cytoplasm</keyword>
<keyword id="KW-0436">Ligase</keyword>
<keyword id="KW-0479">Metal-binding</keyword>
<keyword id="KW-0547">Nucleotide-binding</keyword>
<keyword id="KW-0648">Protein biosynthesis</keyword>
<keyword id="KW-0694">RNA-binding</keyword>
<keyword id="KW-0820">tRNA-binding</keyword>
<keyword id="KW-0862">Zinc</keyword>
<feature type="chain" id="PRO_0000347710" description="Alanine--tRNA ligase">
    <location>
        <begin position="1"/>
        <end position="889"/>
    </location>
</feature>
<feature type="binding site" evidence="1">
    <location>
        <position position="574"/>
    </location>
    <ligand>
        <name>Zn(2+)</name>
        <dbReference type="ChEBI" id="CHEBI:29105"/>
    </ligand>
</feature>
<feature type="binding site" evidence="1">
    <location>
        <position position="578"/>
    </location>
    <ligand>
        <name>Zn(2+)</name>
        <dbReference type="ChEBI" id="CHEBI:29105"/>
    </ligand>
</feature>
<feature type="binding site" evidence="1">
    <location>
        <position position="682"/>
    </location>
    <ligand>
        <name>Zn(2+)</name>
        <dbReference type="ChEBI" id="CHEBI:29105"/>
    </ligand>
</feature>
<feature type="binding site" evidence="1">
    <location>
        <position position="686"/>
    </location>
    <ligand>
        <name>Zn(2+)</name>
        <dbReference type="ChEBI" id="CHEBI:29105"/>
    </ligand>
</feature>
<comment type="function">
    <text evidence="1">Catalyzes the attachment of alanine to tRNA(Ala) in a two-step reaction: alanine is first activated by ATP to form Ala-AMP and then transferred to the acceptor end of tRNA(Ala). Also edits incorrectly charged Ser-tRNA(Ala) and Gly-tRNA(Ala) via its editing domain.</text>
</comment>
<comment type="catalytic activity">
    <reaction evidence="1">
        <text>tRNA(Ala) + L-alanine + ATP = L-alanyl-tRNA(Ala) + AMP + diphosphate</text>
        <dbReference type="Rhea" id="RHEA:12540"/>
        <dbReference type="Rhea" id="RHEA-COMP:9657"/>
        <dbReference type="Rhea" id="RHEA-COMP:9923"/>
        <dbReference type="ChEBI" id="CHEBI:30616"/>
        <dbReference type="ChEBI" id="CHEBI:33019"/>
        <dbReference type="ChEBI" id="CHEBI:57972"/>
        <dbReference type="ChEBI" id="CHEBI:78442"/>
        <dbReference type="ChEBI" id="CHEBI:78497"/>
        <dbReference type="ChEBI" id="CHEBI:456215"/>
        <dbReference type="EC" id="6.1.1.7"/>
    </reaction>
</comment>
<comment type="cofactor">
    <cofactor evidence="1">
        <name>Zn(2+)</name>
        <dbReference type="ChEBI" id="CHEBI:29105"/>
    </cofactor>
    <text evidence="1">Binds 1 zinc ion per subunit.</text>
</comment>
<comment type="subcellular location">
    <subcellularLocation>
        <location evidence="1">Cytoplasm</location>
    </subcellularLocation>
</comment>
<comment type="domain">
    <text evidence="1">Consists of three domains; the N-terminal catalytic domain, the editing domain and the C-terminal C-Ala domain. The editing domain removes incorrectly charged amino acids, while the C-Ala domain, along with tRNA(Ala), serves as a bridge to cooperatively bring together the editing and aminoacylation centers thus stimulating deacylation of misacylated tRNAs.</text>
</comment>
<comment type="similarity">
    <text evidence="1">Belongs to the class-II aminoacyl-tRNA synthetase family.</text>
</comment>
<reference key="1">
    <citation type="journal article" date="2008" name="DNA Res.">
        <title>The whole-genome sequencing of the obligate intracellular bacterium Orientia tsutsugamushi revealed massive gene amplification during reductive genome evolution.</title>
        <authorList>
            <person name="Nakayama K."/>
            <person name="Yamashita A."/>
            <person name="Kurokawa K."/>
            <person name="Morimoto T."/>
            <person name="Ogawa M."/>
            <person name="Fukuhara M."/>
            <person name="Urakami H."/>
            <person name="Ohnishi M."/>
            <person name="Uchiyama I."/>
            <person name="Ogura Y."/>
            <person name="Ooka T."/>
            <person name="Oshima K."/>
            <person name="Tamura A."/>
            <person name="Hattori M."/>
            <person name="Hayashi T."/>
        </authorList>
    </citation>
    <scope>NUCLEOTIDE SEQUENCE [LARGE SCALE GENOMIC DNA]</scope>
    <source>
        <strain>Ikeda</strain>
    </source>
</reference>
<name>SYA_ORITI</name>
<sequence>MTTFLNINQIRTTFIEFFKKYGHHHASSSSLVPGNDPSLFFVNAGIVQFKDYVRAPETSKYSRVVTCQKCVRAGGKHNDLESVGYTARHHTFFEMLGNFSFGEDNAKADFMQLIWNFLTKELFIDEDRLIVTVYHTDHETAKLWRSIAGLDDSRIIRIKTDDNFWSMGPVGPCGPCTEIFYDHGDKIPGGLPGTKDENGGRYVEIWNIVFMQYEQLNESTRVELAKRCIDTGAGLERIATVLQGVYDNYDIDLFKNLIANIEHLTKIKSVGEANFSHRIIADHLRASAFLIADGVMPSNDGRGYVLRRIMRRAMNQIHQLGCKEPVMHLLVQGLINEMGDFYKELRVRQELITYLLKNEEEKFKTTLSKGLKLLEEESKNLTSGSQLSGHIAFKLYDTYGFPFDLTQDILKKRSISINKTEFDQNMLEQQNRARQLWKGQGSNKEQLLWEKLKEEFRATEFVGYSLCQAEGIVVSLIQDNQYVEYIDINQVDDNNKEFWLITNQTPFYGQSGGQIGDIGIIKNNECTIHVTDTIKLFGCTHVHICKIVSGKINLNAVVHMAIDKQYRTQLQIHHSATHILHAALREILGNHIIQKGSLVAYDYLRFDVSHPTSISKDLLTKIENRVNEIILNNTAVKLRIMPFDQAIAHGAVALFEEKYGDEVRAISIGETSDARYYSFELCGGTHVKYTGDIGAFRILSESAIAAGVRRIEAIAGKHVIKQARQNSELLDLIAEKFSVTKQTIMSKIDGIIEENNLLKKQLHQLKYNQLILCEKDIQNMADNIGKIKLVYKNIEDYDLQIVRKAVSNTTKNIQNLVMVVISNNDKKSTIIIGVSDNITNKIQANNLVKEIINYIGGSGGGSATLAQIGCQYTSKLLDLKNIICKLLAT</sequence>
<proteinExistence type="inferred from homology"/>
<accession>B3CST3</accession>
<dbReference type="EC" id="6.1.1.7" evidence="1"/>
<dbReference type="EMBL" id="AP008981">
    <property type="protein sequence ID" value="BAG40430.1"/>
    <property type="molecule type" value="Genomic_DNA"/>
</dbReference>
<dbReference type="RefSeq" id="WP_012461555.1">
    <property type="nucleotide sequence ID" value="NC_010793.1"/>
</dbReference>
<dbReference type="SMR" id="B3CST3"/>
<dbReference type="KEGG" id="ott:OTT_0972"/>
<dbReference type="HOGENOM" id="CLU_004485_1_1_5"/>
<dbReference type="OrthoDB" id="9803884at2"/>
<dbReference type="Proteomes" id="UP000001033">
    <property type="component" value="Chromosome"/>
</dbReference>
<dbReference type="GO" id="GO:0005829">
    <property type="term" value="C:cytosol"/>
    <property type="evidence" value="ECO:0007669"/>
    <property type="project" value="TreeGrafter"/>
</dbReference>
<dbReference type="GO" id="GO:0004813">
    <property type="term" value="F:alanine-tRNA ligase activity"/>
    <property type="evidence" value="ECO:0007669"/>
    <property type="project" value="UniProtKB-UniRule"/>
</dbReference>
<dbReference type="GO" id="GO:0002161">
    <property type="term" value="F:aminoacyl-tRNA deacylase activity"/>
    <property type="evidence" value="ECO:0007669"/>
    <property type="project" value="TreeGrafter"/>
</dbReference>
<dbReference type="GO" id="GO:0005524">
    <property type="term" value="F:ATP binding"/>
    <property type="evidence" value="ECO:0007669"/>
    <property type="project" value="UniProtKB-UniRule"/>
</dbReference>
<dbReference type="GO" id="GO:0000049">
    <property type="term" value="F:tRNA binding"/>
    <property type="evidence" value="ECO:0007669"/>
    <property type="project" value="UniProtKB-KW"/>
</dbReference>
<dbReference type="GO" id="GO:0008270">
    <property type="term" value="F:zinc ion binding"/>
    <property type="evidence" value="ECO:0007669"/>
    <property type="project" value="UniProtKB-UniRule"/>
</dbReference>
<dbReference type="GO" id="GO:0006419">
    <property type="term" value="P:alanyl-tRNA aminoacylation"/>
    <property type="evidence" value="ECO:0007669"/>
    <property type="project" value="UniProtKB-UniRule"/>
</dbReference>
<dbReference type="GO" id="GO:0045892">
    <property type="term" value="P:negative regulation of DNA-templated transcription"/>
    <property type="evidence" value="ECO:0007669"/>
    <property type="project" value="TreeGrafter"/>
</dbReference>
<dbReference type="CDD" id="cd00673">
    <property type="entry name" value="AlaRS_core"/>
    <property type="match status" value="1"/>
</dbReference>
<dbReference type="FunFam" id="3.10.310.40:FF:000001">
    <property type="entry name" value="Alanine--tRNA ligase"/>
    <property type="match status" value="1"/>
</dbReference>
<dbReference type="FunFam" id="3.30.930.10:FF:000004">
    <property type="entry name" value="Alanine--tRNA ligase"/>
    <property type="match status" value="1"/>
</dbReference>
<dbReference type="FunFam" id="3.30.980.10:FF:000004">
    <property type="entry name" value="Alanine--tRNA ligase, cytoplasmic"/>
    <property type="match status" value="1"/>
</dbReference>
<dbReference type="Gene3D" id="2.40.30.130">
    <property type="match status" value="1"/>
</dbReference>
<dbReference type="Gene3D" id="3.10.310.40">
    <property type="match status" value="1"/>
</dbReference>
<dbReference type="Gene3D" id="3.30.54.20">
    <property type="match status" value="1"/>
</dbReference>
<dbReference type="Gene3D" id="3.30.930.10">
    <property type="entry name" value="Bira Bifunctional Protein, Domain 2"/>
    <property type="match status" value="1"/>
</dbReference>
<dbReference type="Gene3D" id="3.30.980.10">
    <property type="entry name" value="Threonyl-trna Synthetase, Chain A, domain 2"/>
    <property type="match status" value="1"/>
</dbReference>
<dbReference type="HAMAP" id="MF_00036_B">
    <property type="entry name" value="Ala_tRNA_synth_B"/>
    <property type="match status" value="1"/>
</dbReference>
<dbReference type="InterPro" id="IPR045864">
    <property type="entry name" value="aa-tRNA-synth_II/BPL/LPL"/>
</dbReference>
<dbReference type="InterPro" id="IPR002318">
    <property type="entry name" value="Ala-tRNA-lgiase_IIc"/>
</dbReference>
<dbReference type="InterPro" id="IPR018162">
    <property type="entry name" value="Ala-tRNA-ligase_IIc_anticod-bd"/>
</dbReference>
<dbReference type="InterPro" id="IPR018165">
    <property type="entry name" value="Ala-tRNA-synth_IIc_core"/>
</dbReference>
<dbReference type="InterPro" id="IPR018164">
    <property type="entry name" value="Ala-tRNA-synth_IIc_N"/>
</dbReference>
<dbReference type="InterPro" id="IPR050058">
    <property type="entry name" value="Ala-tRNA_ligase"/>
</dbReference>
<dbReference type="InterPro" id="IPR023033">
    <property type="entry name" value="Ala_tRNA_ligase_euk/bac"/>
</dbReference>
<dbReference type="InterPro" id="IPR003156">
    <property type="entry name" value="DHHA1_dom"/>
</dbReference>
<dbReference type="InterPro" id="IPR018163">
    <property type="entry name" value="Thr/Ala-tRNA-synth_IIc_edit"/>
</dbReference>
<dbReference type="InterPro" id="IPR009000">
    <property type="entry name" value="Transl_B-barrel_sf"/>
</dbReference>
<dbReference type="InterPro" id="IPR012947">
    <property type="entry name" value="tRNA_SAD"/>
</dbReference>
<dbReference type="NCBIfam" id="TIGR00344">
    <property type="entry name" value="alaS"/>
    <property type="match status" value="1"/>
</dbReference>
<dbReference type="PANTHER" id="PTHR11777:SF9">
    <property type="entry name" value="ALANINE--TRNA LIGASE, CYTOPLASMIC"/>
    <property type="match status" value="1"/>
</dbReference>
<dbReference type="PANTHER" id="PTHR11777">
    <property type="entry name" value="ALANYL-TRNA SYNTHETASE"/>
    <property type="match status" value="1"/>
</dbReference>
<dbReference type="Pfam" id="PF02272">
    <property type="entry name" value="DHHA1"/>
    <property type="match status" value="1"/>
</dbReference>
<dbReference type="Pfam" id="PF01411">
    <property type="entry name" value="tRNA-synt_2c"/>
    <property type="match status" value="1"/>
</dbReference>
<dbReference type="Pfam" id="PF07973">
    <property type="entry name" value="tRNA_SAD"/>
    <property type="match status" value="1"/>
</dbReference>
<dbReference type="PRINTS" id="PR00980">
    <property type="entry name" value="TRNASYNTHALA"/>
</dbReference>
<dbReference type="SMART" id="SM00863">
    <property type="entry name" value="tRNA_SAD"/>
    <property type="match status" value="1"/>
</dbReference>
<dbReference type="SUPFAM" id="SSF55681">
    <property type="entry name" value="Class II aaRS and biotin synthetases"/>
    <property type="match status" value="1"/>
</dbReference>
<dbReference type="SUPFAM" id="SSF101353">
    <property type="entry name" value="Putative anticodon-binding domain of alanyl-tRNA synthetase (AlaRS)"/>
    <property type="match status" value="1"/>
</dbReference>
<dbReference type="SUPFAM" id="SSF55186">
    <property type="entry name" value="ThrRS/AlaRS common domain"/>
    <property type="match status" value="1"/>
</dbReference>
<dbReference type="SUPFAM" id="SSF50447">
    <property type="entry name" value="Translation proteins"/>
    <property type="match status" value="1"/>
</dbReference>
<dbReference type="PROSITE" id="PS50860">
    <property type="entry name" value="AA_TRNA_LIGASE_II_ALA"/>
    <property type="match status" value="1"/>
</dbReference>
<organism>
    <name type="scientific">Orientia tsutsugamushi (strain Ikeda)</name>
    <name type="common">Rickettsia tsutsugamushi</name>
    <dbReference type="NCBI Taxonomy" id="334380"/>
    <lineage>
        <taxon>Bacteria</taxon>
        <taxon>Pseudomonadati</taxon>
        <taxon>Pseudomonadota</taxon>
        <taxon>Alphaproteobacteria</taxon>
        <taxon>Rickettsiales</taxon>
        <taxon>Rickettsiaceae</taxon>
        <taxon>Rickettsieae</taxon>
        <taxon>Orientia</taxon>
    </lineage>
</organism>
<gene>
    <name evidence="1" type="primary">alaS</name>
    <name type="ordered locus">OTT_0972</name>
</gene>
<protein>
    <recommendedName>
        <fullName evidence="1">Alanine--tRNA ligase</fullName>
        <ecNumber evidence="1">6.1.1.7</ecNumber>
    </recommendedName>
    <alternativeName>
        <fullName evidence="1">Alanyl-tRNA synthetase</fullName>
        <shortName evidence="1">AlaRS</shortName>
    </alternativeName>
</protein>
<evidence type="ECO:0000255" key="1">
    <source>
        <dbReference type="HAMAP-Rule" id="MF_00036"/>
    </source>
</evidence>